<keyword id="KW-0687">Ribonucleoprotein</keyword>
<keyword id="KW-0689">Ribosomal protein</keyword>
<keyword id="KW-0694">RNA-binding</keyword>
<keyword id="KW-0699">rRNA-binding</keyword>
<keyword id="KW-0820">tRNA-binding</keyword>
<accession>Q3API5</accession>
<gene>
    <name evidence="1" type="primary">rplE</name>
    <name type="ordered locus">Cag_1839</name>
</gene>
<sequence>MSGNNESASYASSLARLDTYYREKVVPALMERFQYKNIMEVPRLQKIAINIGVGDAAGEPKLLDVAVGELTQIAGQKPQIRKSKKAISNFKLREGQAIGCRVTLRRKAMYEFFDRFVSLAVPRIRDFRGLSDTSFDGRGNYTAGVKEQIIFPEIDIDKVPRISGMDISFVTSAKSDEEAYVLLSELGMPFKKKNN</sequence>
<name>RL5_CHLCH</name>
<proteinExistence type="inferred from homology"/>
<protein>
    <recommendedName>
        <fullName evidence="1">Large ribosomal subunit protein uL5</fullName>
    </recommendedName>
    <alternativeName>
        <fullName evidence="2">50S ribosomal protein L5</fullName>
    </alternativeName>
</protein>
<feature type="chain" id="PRO_0000242988" description="Large ribosomal subunit protein uL5">
    <location>
        <begin position="1"/>
        <end position="195"/>
    </location>
</feature>
<evidence type="ECO:0000255" key="1">
    <source>
        <dbReference type="HAMAP-Rule" id="MF_01333"/>
    </source>
</evidence>
<evidence type="ECO:0000305" key="2"/>
<organism>
    <name type="scientific">Chlorobium chlorochromatii (strain CaD3)</name>
    <dbReference type="NCBI Taxonomy" id="340177"/>
    <lineage>
        <taxon>Bacteria</taxon>
        <taxon>Pseudomonadati</taxon>
        <taxon>Chlorobiota</taxon>
        <taxon>Chlorobiia</taxon>
        <taxon>Chlorobiales</taxon>
        <taxon>Chlorobiaceae</taxon>
        <taxon>Chlorobium/Pelodictyon group</taxon>
        <taxon>Chlorobium</taxon>
    </lineage>
</organism>
<dbReference type="EMBL" id="CP000108">
    <property type="protein sequence ID" value="ABB29090.1"/>
    <property type="molecule type" value="Genomic_DNA"/>
</dbReference>
<dbReference type="SMR" id="Q3API5"/>
<dbReference type="STRING" id="340177.Cag_1839"/>
<dbReference type="KEGG" id="cch:Cag_1839"/>
<dbReference type="eggNOG" id="COG0094">
    <property type="taxonomic scope" value="Bacteria"/>
</dbReference>
<dbReference type="HOGENOM" id="CLU_061015_2_1_10"/>
<dbReference type="OrthoDB" id="9806626at2"/>
<dbReference type="GO" id="GO:1990904">
    <property type="term" value="C:ribonucleoprotein complex"/>
    <property type="evidence" value="ECO:0007669"/>
    <property type="project" value="UniProtKB-KW"/>
</dbReference>
<dbReference type="GO" id="GO:0005840">
    <property type="term" value="C:ribosome"/>
    <property type="evidence" value="ECO:0007669"/>
    <property type="project" value="UniProtKB-KW"/>
</dbReference>
<dbReference type="GO" id="GO:0019843">
    <property type="term" value="F:rRNA binding"/>
    <property type="evidence" value="ECO:0007669"/>
    <property type="project" value="UniProtKB-UniRule"/>
</dbReference>
<dbReference type="GO" id="GO:0003735">
    <property type="term" value="F:structural constituent of ribosome"/>
    <property type="evidence" value="ECO:0007669"/>
    <property type="project" value="InterPro"/>
</dbReference>
<dbReference type="GO" id="GO:0000049">
    <property type="term" value="F:tRNA binding"/>
    <property type="evidence" value="ECO:0007669"/>
    <property type="project" value="UniProtKB-UniRule"/>
</dbReference>
<dbReference type="GO" id="GO:0006412">
    <property type="term" value="P:translation"/>
    <property type="evidence" value="ECO:0007669"/>
    <property type="project" value="UniProtKB-UniRule"/>
</dbReference>
<dbReference type="FunFam" id="3.30.1440.10:FF:000001">
    <property type="entry name" value="50S ribosomal protein L5"/>
    <property type="match status" value="1"/>
</dbReference>
<dbReference type="Gene3D" id="3.30.1440.10">
    <property type="match status" value="1"/>
</dbReference>
<dbReference type="HAMAP" id="MF_01333_B">
    <property type="entry name" value="Ribosomal_uL5_B"/>
    <property type="match status" value="1"/>
</dbReference>
<dbReference type="InterPro" id="IPR002132">
    <property type="entry name" value="Ribosomal_uL5"/>
</dbReference>
<dbReference type="InterPro" id="IPR020930">
    <property type="entry name" value="Ribosomal_uL5_bac-type"/>
</dbReference>
<dbReference type="InterPro" id="IPR031309">
    <property type="entry name" value="Ribosomal_uL5_C"/>
</dbReference>
<dbReference type="InterPro" id="IPR022803">
    <property type="entry name" value="Ribosomal_uL5_dom_sf"/>
</dbReference>
<dbReference type="InterPro" id="IPR031310">
    <property type="entry name" value="Ribosomal_uL5_N"/>
</dbReference>
<dbReference type="NCBIfam" id="NF000585">
    <property type="entry name" value="PRK00010.1"/>
    <property type="match status" value="1"/>
</dbReference>
<dbReference type="PANTHER" id="PTHR11994">
    <property type="entry name" value="60S RIBOSOMAL PROTEIN L11-RELATED"/>
    <property type="match status" value="1"/>
</dbReference>
<dbReference type="Pfam" id="PF00281">
    <property type="entry name" value="Ribosomal_L5"/>
    <property type="match status" value="1"/>
</dbReference>
<dbReference type="Pfam" id="PF00673">
    <property type="entry name" value="Ribosomal_L5_C"/>
    <property type="match status" value="1"/>
</dbReference>
<dbReference type="PIRSF" id="PIRSF002161">
    <property type="entry name" value="Ribosomal_L5"/>
    <property type="match status" value="1"/>
</dbReference>
<dbReference type="SUPFAM" id="SSF55282">
    <property type="entry name" value="RL5-like"/>
    <property type="match status" value="1"/>
</dbReference>
<comment type="function">
    <text evidence="1">This is one of the proteins that bind and probably mediate the attachment of the 5S RNA into the large ribosomal subunit, where it forms part of the central protuberance. In the 70S ribosome it contacts protein S13 of the 30S subunit (bridge B1b), connecting the 2 subunits; this bridge is implicated in subunit movement. Contacts the P site tRNA; the 5S rRNA and some of its associated proteins might help stabilize positioning of ribosome-bound tRNAs.</text>
</comment>
<comment type="subunit">
    <text evidence="1">Part of the 50S ribosomal subunit; part of the 5S rRNA/L5/L18/L25 subcomplex. Contacts the 5S rRNA and the P site tRNA. Forms a bridge to the 30S subunit in the 70S ribosome.</text>
</comment>
<comment type="similarity">
    <text evidence="1">Belongs to the universal ribosomal protein uL5 family.</text>
</comment>
<reference key="1">
    <citation type="submission" date="2005-08" db="EMBL/GenBank/DDBJ databases">
        <title>Complete sequence of Chlorobium chlorochromatii CaD3.</title>
        <authorList>
            <consortium name="US DOE Joint Genome Institute"/>
            <person name="Copeland A."/>
            <person name="Lucas S."/>
            <person name="Lapidus A."/>
            <person name="Barry K."/>
            <person name="Detter J.C."/>
            <person name="Glavina T."/>
            <person name="Hammon N."/>
            <person name="Israni S."/>
            <person name="Pitluck S."/>
            <person name="Bryant D."/>
            <person name="Schmutz J."/>
            <person name="Larimer F."/>
            <person name="Land M."/>
            <person name="Kyrpides N."/>
            <person name="Ivanova N."/>
            <person name="Richardson P."/>
        </authorList>
    </citation>
    <scope>NUCLEOTIDE SEQUENCE [LARGE SCALE GENOMIC DNA]</scope>
    <source>
        <strain>CaD3</strain>
    </source>
</reference>